<evidence type="ECO:0000255" key="1">
    <source>
        <dbReference type="HAMAP-Rule" id="MF_04014"/>
    </source>
</evidence>
<evidence type="ECO:0000256" key="2">
    <source>
        <dbReference type="SAM" id="MobiDB-lite"/>
    </source>
</evidence>
<organismHost>
    <name type="scientific">Bos taurus</name>
    <name type="common">Bovine</name>
    <dbReference type="NCBI Taxonomy" id="9913"/>
</organismHost>
<keyword id="KW-0067">ATP-binding</keyword>
<keyword id="KW-1048">Host nucleus</keyword>
<keyword id="KW-0426">Late protein</keyword>
<keyword id="KW-0479">Metal-binding</keyword>
<keyword id="KW-0547">Nucleotide-binding</keyword>
<keyword id="KW-0231">Viral genome packaging</keyword>
<keyword id="KW-1188">Viral release from host cell</keyword>
<keyword id="KW-0862">Zinc</keyword>
<keyword id="KW-0863">Zinc-finger</keyword>
<dbReference type="PIR" id="B29242">
    <property type="entry name" value="WMBEBH"/>
</dbReference>
<dbReference type="SMR" id="P17587"/>
<dbReference type="GO" id="GO:0042025">
    <property type="term" value="C:host cell nucleus"/>
    <property type="evidence" value="ECO:0007669"/>
    <property type="project" value="UniProtKB-SubCell"/>
</dbReference>
<dbReference type="GO" id="GO:0005524">
    <property type="term" value="F:ATP binding"/>
    <property type="evidence" value="ECO:0007669"/>
    <property type="project" value="UniProtKB-KW"/>
</dbReference>
<dbReference type="GO" id="GO:0008270">
    <property type="term" value="F:zinc ion binding"/>
    <property type="evidence" value="ECO:0007669"/>
    <property type="project" value="UniProtKB-KW"/>
</dbReference>
<dbReference type="GO" id="GO:0019073">
    <property type="term" value="P:viral DNA genome packaging"/>
    <property type="evidence" value="ECO:0007669"/>
    <property type="project" value="InterPro"/>
</dbReference>
<dbReference type="HAMAP" id="MF_04014">
    <property type="entry name" value="HSV_TRM1"/>
    <property type="match status" value="1"/>
</dbReference>
<dbReference type="InterPro" id="IPR000501">
    <property type="entry name" value="UL28/UL56"/>
</dbReference>
<dbReference type="Pfam" id="PF01366">
    <property type="entry name" value="PRTP"/>
    <property type="match status" value="1"/>
</dbReference>
<sequence length="664" mass="72368">MADAFDPSDTRPDELAAVARQKLLVVLGQLQTYIFQVELLKRCDPQVARHQIGKLKLNALQVRAVSRHFMEGMSSQAATLITPLTLALELSLEYARREGEKLLEALNDLGERSSPVAYFEGTMGLARGCPHHQAVKLATYGGEIDKELCFLHDVENFLKQMNYCHLITPASAAAEALVSVKAFLARTVGSELIVPPEISDPSHPCHVCFEELCVTANQGATASRRLAGKICDHVTQQARVRLDADEMRRNLPHVVGLSEARRARALHALEVSSKMTEANSGGPAEAPGPAAAQEREASALLDAHHVFKSAPPGLYAVSELRFWLSSGDRTSGSTVDAFADNLSALAERERRYETGAVAVELAAFGRRGEHFDRTFGDRVASLDMVDALFVGGQSAAPDDQIEALVRACYNHHLSAPVLRQLAGSEHGDAEALRSALEGLHAAEDPPGDGNAEKEARRAPSLGGGPEDDWAALAARAAADVGARRRLYADRLTKRSLASLGRCVREQRGELEKMLRVSTYGEVLPTVFAAVCNGFAARTRFCELTARAGTVIDNRGNPDTFDTHRFMRASLMRHRVDPALLPGITHQFFELVNGPLFDHATHGFAQPPNTALYFSVENVGLLPHLKEELARFMMGKADSDWAISEFQKFYHFDGTSGITPTQRIA</sequence>
<gene>
    <name evidence="1" type="primary">TRM1</name>
    <name type="ordered locus">UL28</name>
</gene>
<comment type="function">
    <text evidence="1">Component of the molecular motor that translocates viral genomic DNA in empty capsid during DNA packaging. Forms a tripartite terminase complex together with TRM2 and TRM3 in the host cytoplasm. Once the complex reaches the host nucleus, it interacts with the capsid portal vertex. This portal forms a ring in which genomic DNA is translocated into the capsid. TRM1 carries an endonuclease activity that plays an important role for the cleavage of concatemeric viral DNA into unit length genomes.</text>
</comment>
<comment type="subunit">
    <text evidence="1">Associates with TRM2 and TRM3 to form the tripartite terminase complex. Interacts with portal protein.</text>
</comment>
<comment type="subcellular location">
    <subcellularLocation>
        <location evidence="1">Host nucleus</location>
    </subcellularLocation>
    <text evidence="1">Found associated with the external surface of the viral capsid during assembly and DNA packaging, but seems absent in extracellular mature virions.</text>
</comment>
<comment type="similarity">
    <text evidence="1">Belongs to the herpesviridae TRM1 protein family.</text>
</comment>
<name>TRM1_BHV2B</name>
<reference key="1">
    <citation type="journal article" date="1988" name="Virology">
        <title>Conservation of a gene cluster including glycoprotein B in bovine herpesvirus type 2 (BHV-2) and herpes simplex virus type 1 (HSV-1).</title>
        <authorList>
            <person name="Hammerschmidt W."/>
            <person name="Conraths F."/>
            <person name="Mankertz J."/>
            <person name="Pauli G."/>
            <person name="Ludwig H."/>
            <person name="Buhk H.-J."/>
        </authorList>
    </citation>
    <scope>NUCLEOTIDE SEQUENCE</scope>
</reference>
<feature type="chain" id="PRO_0000115878" description="Tripartite terminase subunit 1">
    <location>
        <begin position="1"/>
        <end position="664"/>
    </location>
</feature>
<feature type="zinc finger region" description="C3H1-type" evidence="1">
    <location>
        <begin position="205"/>
        <end position="233"/>
    </location>
</feature>
<feature type="region of interest" description="Disordered" evidence="2">
    <location>
        <begin position="273"/>
        <end position="295"/>
    </location>
</feature>
<feature type="region of interest" description="Disordered" evidence="2">
    <location>
        <begin position="440"/>
        <end position="466"/>
    </location>
</feature>
<feature type="compositionally biased region" description="Low complexity" evidence="2">
    <location>
        <begin position="281"/>
        <end position="292"/>
    </location>
</feature>
<accession>P17587</accession>
<organism>
    <name type="scientific">Bovine herpesvirus 2 (strain BMV)</name>
    <name type="common">BoHV-2</name>
    <name type="synonym">Bovine mammillitis virus</name>
    <dbReference type="NCBI Taxonomy" id="10296"/>
    <lineage>
        <taxon>Viruses</taxon>
        <taxon>Duplodnaviria</taxon>
        <taxon>Heunggongvirae</taxon>
        <taxon>Peploviricota</taxon>
        <taxon>Herviviricetes</taxon>
        <taxon>Herpesvirales</taxon>
        <taxon>Orthoherpesviridae</taxon>
        <taxon>Alphaherpesvirinae</taxon>
        <taxon>Simplexvirus</taxon>
        <taxon>Simplexvirus bovinealpha2</taxon>
    </lineage>
</organism>
<protein>
    <recommendedName>
        <fullName evidence="1">Tripartite terminase subunit 1</fullName>
    </recommendedName>
</protein>
<proteinExistence type="inferred from homology"/>